<gene>
    <name evidence="1" type="primary">gatA</name>
    <name type="ordered locus">RPA3107</name>
</gene>
<organism>
    <name type="scientific">Rhodopseudomonas palustris (strain ATCC BAA-98 / CGA009)</name>
    <dbReference type="NCBI Taxonomy" id="258594"/>
    <lineage>
        <taxon>Bacteria</taxon>
        <taxon>Pseudomonadati</taxon>
        <taxon>Pseudomonadota</taxon>
        <taxon>Alphaproteobacteria</taxon>
        <taxon>Hyphomicrobiales</taxon>
        <taxon>Nitrobacteraceae</taxon>
        <taxon>Rhodopseudomonas</taxon>
    </lineage>
</organism>
<accession>Q6N575</accession>
<protein>
    <recommendedName>
        <fullName evidence="1">Glutamyl-tRNA(Gln) amidotransferase subunit A</fullName>
        <shortName evidence="1">Glu-ADT subunit A</shortName>
        <ecNumber evidence="1">6.3.5.7</ecNumber>
    </recommendedName>
</protein>
<proteinExistence type="inferred from homology"/>
<comment type="function">
    <text evidence="1">Allows the formation of correctly charged Gln-tRNA(Gln) through the transamidation of misacylated Glu-tRNA(Gln) in organisms which lack glutaminyl-tRNA synthetase. The reaction takes place in the presence of glutamine and ATP through an activated gamma-phospho-Glu-tRNA(Gln).</text>
</comment>
<comment type="catalytic activity">
    <reaction evidence="1">
        <text>L-glutamyl-tRNA(Gln) + L-glutamine + ATP + H2O = L-glutaminyl-tRNA(Gln) + L-glutamate + ADP + phosphate + H(+)</text>
        <dbReference type="Rhea" id="RHEA:17521"/>
        <dbReference type="Rhea" id="RHEA-COMP:9681"/>
        <dbReference type="Rhea" id="RHEA-COMP:9684"/>
        <dbReference type="ChEBI" id="CHEBI:15377"/>
        <dbReference type="ChEBI" id="CHEBI:15378"/>
        <dbReference type="ChEBI" id="CHEBI:29985"/>
        <dbReference type="ChEBI" id="CHEBI:30616"/>
        <dbReference type="ChEBI" id="CHEBI:43474"/>
        <dbReference type="ChEBI" id="CHEBI:58359"/>
        <dbReference type="ChEBI" id="CHEBI:78520"/>
        <dbReference type="ChEBI" id="CHEBI:78521"/>
        <dbReference type="ChEBI" id="CHEBI:456216"/>
        <dbReference type="EC" id="6.3.5.7"/>
    </reaction>
</comment>
<comment type="subunit">
    <text evidence="1">Heterotrimer of A, B and C subunits.</text>
</comment>
<comment type="similarity">
    <text evidence="1">Belongs to the amidase family. GatA subfamily.</text>
</comment>
<dbReference type="EC" id="6.3.5.7" evidence="1"/>
<dbReference type="EMBL" id="BX572603">
    <property type="protein sequence ID" value="CAE28548.1"/>
    <property type="molecule type" value="Genomic_DNA"/>
</dbReference>
<dbReference type="RefSeq" id="WP_011158652.1">
    <property type="nucleotide sequence ID" value="NZ_CP116810.1"/>
</dbReference>
<dbReference type="SMR" id="Q6N575"/>
<dbReference type="STRING" id="258594.RPA3107"/>
<dbReference type="GeneID" id="66894189"/>
<dbReference type="eggNOG" id="COG0154">
    <property type="taxonomic scope" value="Bacteria"/>
</dbReference>
<dbReference type="HOGENOM" id="CLU_009600_0_3_5"/>
<dbReference type="PhylomeDB" id="Q6N575"/>
<dbReference type="GO" id="GO:0030956">
    <property type="term" value="C:glutamyl-tRNA(Gln) amidotransferase complex"/>
    <property type="evidence" value="ECO:0007669"/>
    <property type="project" value="InterPro"/>
</dbReference>
<dbReference type="GO" id="GO:0005524">
    <property type="term" value="F:ATP binding"/>
    <property type="evidence" value="ECO:0007669"/>
    <property type="project" value="UniProtKB-KW"/>
</dbReference>
<dbReference type="GO" id="GO:0050567">
    <property type="term" value="F:glutaminyl-tRNA synthase (glutamine-hydrolyzing) activity"/>
    <property type="evidence" value="ECO:0007669"/>
    <property type="project" value="UniProtKB-UniRule"/>
</dbReference>
<dbReference type="GO" id="GO:0006412">
    <property type="term" value="P:translation"/>
    <property type="evidence" value="ECO:0007669"/>
    <property type="project" value="UniProtKB-UniRule"/>
</dbReference>
<dbReference type="Gene3D" id="3.90.1300.10">
    <property type="entry name" value="Amidase signature (AS) domain"/>
    <property type="match status" value="1"/>
</dbReference>
<dbReference type="HAMAP" id="MF_00120">
    <property type="entry name" value="GatA"/>
    <property type="match status" value="1"/>
</dbReference>
<dbReference type="InterPro" id="IPR000120">
    <property type="entry name" value="Amidase"/>
</dbReference>
<dbReference type="InterPro" id="IPR020556">
    <property type="entry name" value="Amidase_CS"/>
</dbReference>
<dbReference type="InterPro" id="IPR023631">
    <property type="entry name" value="Amidase_dom"/>
</dbReference>
<dbReference type="InterPro" id="IPR036928">
    <property type="entry name" value="AS_sf"/>
</dbReference>
<dbReference type="InterPro" id="IPR004412">
    <property type="entry name" value="GatA"/>
</dbReference>
<dbReference type="NCBIfam" id="TIGR00132">
    <property type="entry name" value="gatA"/>
    <property type="match status" value="1"/>
</dbReference>
<dbReference type="PANTHER" id="PTHR11895:SF151">
    <property type="entry name" value="GLUTAMYL-TRNA(GLN) AMIDOTRANSFERASE SUBUNIT A"/>
    <property type="match status" value="1"/>
</dbReference>
<dbReference type="PANTHER" id="PTHR11895">
    <property type="entry name" value="TRANSAMIDASE"/>
    <property type="match status" value="1"/>
</dbReference>
<dbReference type="Pfam" id="PF01425">
    <property type="entry name" value="Amidase"/>
    <property type="match status" value="1"/>
</dbReference>
<dbReference type="SUPFAM" id="SSF75304">
    <property type="entry name" value="Amidase signature (AS) enzymes"/>
    <property type="match status" value="1"/>
</dbReference>
<dbReference type="PROSITE" id="PS00571">
    <property type="entry name" value="AMIDASES"/>
    <property type="match status" value="1"/>
</dbReference>
<feature type="chain" id="PRO_0000241144" description="Glutamyl-tRNA(Gln) amidotransferase subunit A">
    <location>
        <begin position="1"/>
        <end position="492"/>
    </location>
</feature>
<feature type="active site" description="Charge relay system" evidence="1">
    <location>
        <position position="78"/>
    </location>
</feature>
<feature type="active site" description="Charge relay system" evidence="1">
    <location>
        <position position="158"/>
    </location>
</feature>
<feature type="active site" description="Acyl-ester intermediate" evidence="1">
    <location>
        <position position="182"/>
    </location>
</feature>
<name>GATA_RHOPA</name>
<keyword id="KW-0067">ATP-binding</keyword>
<keyword id="KW-0436">Ligase</keyword>
<keyword id="KW-0547">Nucleotide-binding</keyword>
<keyword id="KW-0648">Protein biosynthesis</keyword>
<sequence length="492" mass="51977">MTDLTSLTLAEARDGLANKSFTAVELTDAHLAAIEAARVLNAYVLETPDQARQMAKAADAQIAKGEGGPLAGLPLGIKDLFATKGERTTACSKILGDFKPTYESTVTTQLWRDGAVLLGKLNNDEFAMGSSNETSCFGPVINPWRRAGSDAKLVPGGSSGGSAAAVAAGLCLGATATDTGGSIRQPAAFTGTVGIKPTYGRCSRWGIVAFASSLDQAGPIARTVRDSAILLRSMAGHDPKDTTSVDRPVPNYEAAVGGSVKGMKIGIPKEYRLDGMPAEIEKLWSQGAEWLKAAGAELVEVSLPHTKYALPAYYIVAPAEASSNLARYDGVRYGARVNGRNIIEMYENTRAAGFGAEVKRRIMIGTYVLSAGYYDAYYLRAQKVRTLIKRDFEQCFDQGVSAILTPATPSAAFGIGEKGGADPVEMYLNDIFTVTVNMAGLPGIAVPAGSDSQGLPLGLQLIGRPFDEDTLFSLGEVIEQAAGRFTPAKWWA</sequence>
<reference key="1">
    <citation type="journal article" date="2004" name="Nat. Biotechnol.">
        <title>Complete genome sequence of the metabolically versatile photosynthetic bacterium Rhodopseudomonas palustris.</title>
        <authorList>
            <person name="Larimer F.W."/>
            <person name="Chain P."/>
            <person name="Hauser L."/>
            <person name="Lamerdin J.E."/>
            <person name="Malfatti S."/>
            <person name="Do L."/>
            <person name="Land M.L."/>
            <person name="Pelletier D.A."/>
            <person name="Beatty J.T."/>
            <person name="Lang A.S."/>
            <person name="Tabita F.R."/>
            <person name="Gibson J.L."/>
            <person name="Hanson T.E."/>
            <person name="Bobst C."/>
            <person name="Torres y Torres J.L."/>
            <person name="Peres C."/>
            <person name="Harrison F.H."/>
            <person name="Gibson J."/>
            <person name="Harwood C.S."/>
        </authorList>
    </citation>
    <scope>NUCLEOTIDE SEQUENCE [LARGE SCALE GENOMIC DNA]</scope>
    <source>
        <strain>ATCC BAA-98 / CGA009</strain>
    </source>
</reference>
<evidence type="ECO:0000255" key="1">
    <source>
        <dbReference type="HAMAP-Rule" id="MF_00120"/>
    </source>
</evidence>